<proteinExistence type="predicted"/>
<sequence>MEIGNKVMEMKNDISKWKLIKTLYKVLKLKCWYDDENYAWSGGLSAYADGLRLLSKVGLFKIESEYCRSVTGKFKELKASAVNLNAVDEDELIETLYRVLRQSCIMNIDDNIGESFGKKVYASGLRLLSKLGLFEIESEQGDYIIGKFKEI</sequence>
<protein>
    <recommendedName>
        <fullName>Uncharacterized protein MJ1584</fullName>
    </recommendedName>
</protein>
<keyword id="KW-1185">Reference proteome</keyword>
<dbReference type="EMBL" id="L77117">
    <property type="protein sequence ID" value="AAB99608.1"/>
    <property type="molecule type" value="Genomic_DNA"/>
</dbReference>
<dbReference type="PIR" id="G64497">
    <property type="entry name" value="G64497"/>
</dbReference>
<dbReference type="STRING" id="243232.MJ_1584"/>
<dbReference type="PaxDb" id="243232-MJ_1584"/>
<dbReference type="EnsemblBacteria" id="AAB99608">
    <property type="protein sequence ID" value="AAB99608"/>
    <property type="gene ID" value="MJ_1584"/>
</dbReference>
<dbReference type="KEGG" id="mja:MJ_1584"/>
<dbReference type="HOGENOM" id="CLU_1727254_0_0_2"/>
<dbReference type="InParanoid" id="Q58979"/>
<dbReference type="Proteomes" id="UP000000805">
    <property type="component" value="Chromosome"/>
</dbReference>
<feature type="chain" id="PRO_0000107427" description="Uncharacterized protein MJ1584">
    <location>
        <begin position="1"/>
        <end position="151"/>
    </location>
</feature>
<accession>Q58979</accession>
<reference key="1">
    <citation type="journal article" date="1996" name="Science">
        <title>Complete genome sequence of the methanogenic archaeon, Methanococcus jannaschii.</title>
        <authorList>
            <person name="Bult C.J."/>
            <person name="White O."/>
            <person name="Olsen G.J."/>
            <person name="Zhou L."/>
            <person name="Fleischmann R.D."/>
            <person name="Sutton G.G."/>
            <person name="Blake J.A."/>
            <person name="FitzGerald L.M."/>
            <person name="Clayton R.A."/>
            <person name="Gocayne J.D."/>
            <person name="Kerlavage A.R."/>
            <person name="Dougherty B.A."/>
            <person name="Tomb J.-F."/>
            <person name="Adams M.D."/>
            <person name="Reich C.I."/>
            <person name="Overbeek R."/>
            <person name="Kirkness E.F."/>
            <person name="Weinstock K.G."/>
            <person name="Merrick J.M."/>
            <person name="Glodek A."/>
            <person name="Scott J.L."/>
            <person name="Geoghagen N.S.M."/>
            <person name="Weidman J.F."/>
            <person name="Fuhrmann J.L."/>
            <person name="Nguyen D."/>
            <person name="Utterback T.R."/>
            <person name="Kelley J.M."/>
            <person name="Peterson J.D."/>
            <person name="Sadow P.W."/>
            <person name="Hanna M.C."/>
            <person name="Cotton M.D."/>
            <person name="Roberts K.M."/>
            <person name="Hurst M.A."/>
            <person name="Kaine B.P."/>
            <person name="Borodovsky M."/>
            <person name="Klenk H.-P."/>
            <person name="Fraser C.M."/>
            <person name="Smith H.O."/>
            <person name="Woese C.R."/>
            <person name="Venter J.C."/>
        </authorList>
    </citation>
    <scope>NUCLEOTIDE SEQUENCE [LARGE SCALE GENOMIC DNA]</scope>
    <source>
        <strain>ATCC 43067 / DSM 2661 / JAL-1 / JCM 10045 / NBRC 100440</strain>
    </source>
</reference>
<gene>
    <name type="ordered locus">MJ1584</name>
</gene>
<organism>
    <name type="scientific">Methanocaldococcus jannaschii (strain ATCC 43067 / DSM 2661 / JAL-1 / JCM 10045 / NBRC 100440)</name>
    <name type="common">Methanococcus jannaschii</name>
    <dbReference type="NCBI Taxonomy" id="243232"/>
    <lineage>
        <taxon>Archaea</taxon>
        <taxon>Methanobacteriati</taxon>
        <taxon>Methanobacteriota</taxon>
        <taxon>Methanomada group</taxon>
        <taxon>Methanococci</taxon>
        <taxon>Methanococcales</taxon>
        <taxon>Methanocaldococcaceae</taxon>
        <taxon>Methanocaldococcus</taxon>
    </lineage>
</organism>
<name>Y1584_METJA</name>